<protein>
    <recommendedName>
        <fullName>Phosphoglycerate kinase, glycosomal</fullName>
        <ecNumber evidence="2">2.7.2.3</ecNumber>
    </recommendedName>
    <alternativeName>
        <fullName>Phosphoglycerate kinase C</fullName>
    </alternativeName>
    <alternativeName>
        <fullName>gPGK</fullName>
    </alternativeName>
</protein>
<comment type="catalytic activity">
    <reaction evidence="2">
        <text>(2R)-3-phosphoglycerate + ATP = (2R)-3-phospho-glyceroyl phosphate + ADP</text>
        <dbReference type="Rhea" id="RHEA:14801"/>
        <dbReference type="ChEBI" id="CHEBI:30616"/>
        <dbReference type="ChEBI" id="CHEBI:57604"/>
        <dbReference type="ChEBI" id="CHEBI:58272"/>
        <dbReference type="ChEBI" id="CHEBI:456216"/>
        <dbReference type="EC" id="2.7.2.3"/>
    </reaction>
</comment>
<comment type="cofactor">
    <cofactor evidence="3">
        <name>Mg(2+)</name>
        <dbReference type="ChEBI" id="CHEBI:18420"/>
    </cofactor>
</comment>
<comment type="pathway">
    <text>Carbohydrate degradation; glycolysis; pyruvate from D-glyceraldehyde 3-phosphate: step 2/5.</text>
</comment>
<comment type="subunit">
    <text evidence="1">Monomer.</text>
</comment>
<comment type="subcellular location">
    <subcellularLocation>
        <location>Glycosome</location>
    </subcellularLocation>
</comment>
<comment type="similarity">
    <text evidence="5">Belongs to the phosphoglycerate kinase family.</text>
</comment>
<proteinExistence type="inferred from homology"/>
<sequence length="479" mass="51576">MSLVLKKSIDDATVRDKKVLIRVDFNVPVKNGKITNDFRIRSALPTIQKVLKEGGSCILMSHLGRPKGARMSDPSPEKGVRGYEEAATLRPVAARISELLGQKVEFAPDCLDAASYASKLKNADVLLLENVRFYAEEGSKKEEERDAMAKVLASYGDVYVSDAFGTAHRDSATMTGIPKVLGAGYAGYLMEKEINYFSRVLNNPPRPLVAIVGGAKVSDKIQLLDNMLGRINYLVIGGAMAYTFQKAQGRKIGISMCEEDKLDLAKSLLKKAQERNVQVFLPVDHVCNKEFKAADSPLVTESVDVPDGYMALDIGPRTIHMYEEVIGRCKSAIWNGPMGVFEMPCYSKGTFAVAKAMGTGTQKNGLMSIIGGGDSASAAELSGEAKNMSHVSTGGGASLELLEGKTLPGVAILTDKDVKERGASCKFAFGVGSPSREACPLRCGHIFGGASIVREIVKIVVALLIGIFIGRRMSTKLIR</sequence>
<feature type="chain" id="PRO_0000145854" description="Phosphoglycerate kinase, glycosomal">
    <location>
        <begin position="1"/>
        <end position="479"/>
    </location>
</feature>
<feature type="binding site" evidence="2">
    <location>
        <position position="23"/>
    </location>
    <ligand>
        <name>(2R)-3-phosphoglycerate</name>
        <dbReference type="ChEBI" id="CHEBI:58272"/>
    </ligand>
</feature>
<feature type="binding site" evidence="4">
    <location>
        <position position="24"/>
    </location>
    <ligand>
        <name>(2R)-3-phosphoglycerate</name>
        <dbReference type="ChEBI" id="CHEBI:58272"/>
    </ligand>
</feature>
<feature type="binding site" evidence="2">
    <location>
        <position position="25"/>
    </location>
    <ligand>
        <name>(2R)-3-phosphoglycerate</name>
        <dbReference type="ChEBI" id="CHEBI:58272"/>
    </ligand>
</feature>
<feature type="binding site" evidence="4">
    <location>
        <position position="26"/>
    </location>
    <ligand>
        <name>(2R)-3-phosphoglycerate</name>
        <dbReference type="ChEBI" id="CHEBI:58272"/>
    </ligand>
</feature>
<feature type="binding site" evidence="4">
    <location>
        <position position="39"/>
    </location>
    <ligand>
        <name>(2R)-3-phosphoglycerate</name>
        <dbReference type="ChEBI" id="CHEBI:58272"/>
    </ligand>
</feature>
<feature type="binding site" evidence="2">
    <location>
        <position position="61"/>
    </location>
    <ligand>
        <name>(2R)-3-phosphoglycerate</name>
        <dbReference type="ChEBI" id="CHEBI:58272"/>
    </ligand>
</feature>
<feature type="binding site" evidence="4">
    <location>
        <position position="62"/>
    </location>
    <ligand>
        <name>(2R)-3-phosphoglycerate</name>
        <dbReference type="ChEBI" id="CHEBI:58272"/>
    </ligand>
</feature>
<feature type="binding site" evidence="2">
    <location>
        <position position="64"/>
    </location>
    <ligand>
        <name>(2R)-3-phosphoglycerate</name>
        <dbReference type="ChEBI" id="CHEBI:58272"/>
    </ligand>
</feature>
<feature type="binding site" evidence="4">
    <location>
        <position position="65"/>
    </location>
    <ligand>
        <name>(2R)-3-phosphoglycerate</name>
        <dbReference type="ChEBI" id="CHEBI:58272"/>
    </ligand>
</feature>
<feature type="binding site" evidence="4">
    <location>
        <position position="132"/>
    </location>
    <ligand>
        <name>(2R)-3-phosphoglycerate</name>
        <dbReference type="ChEBI" id="CHEBI:58272"/>
    </ligand>
</feature>
<feature type="binding site" evidence="2">
    <location>
        <position position="168"/>
    </location>
    <ligand>
        <name>(2R)-3-phosphoglycerate</name>
        <dbReference type="ChEBI" id="CHEBI:58272"/>
    </ligand>
</feature>
<feature type="binding site" evidence="4">
    <location>
        <position position="169"/>
    </location>
    <ligand>
        <name>(2R)-3-phosphoglycerate</name>
        <dbReference type="ChEBI" id="CHEBI:58272"/>
    </ligand>
</feature>
<feature type="binding site" evidence="2">
    <location>
        <position position="214"/>
    </location>
    <ligand>
        <name>ADP</name>
        <dbReference type="ChEBI" id="CHEBI:456216"/>
    </ligand>
</feature>
<feature type="binding site" evidence="2">
    <location>
        <position position="214"/>
    </location>
    <ligand>
        <name>CDP</name>
        <dbReference type="ChEBI" id="CHEBI:58069"/>
    </ligand>
</feature>
<feature type="binding site" evidence="3">
    <location>
        <position position="215"/>
    </location>
    <ligand>
        <name>ADP</name>
        <dbReference type="ChEBI" id="CHEBI:456216"/>
    </ligand>
</feature>
<feature type="binding site" evidence="4">
    <location>
        <position position="215"/>
    </location>
    <ligand>
        <name>AMP</name>
        <dbReference type="ChEBI" id="CHEBI:456215"/>
    </ligand>
</feature>
<feature type="binding site" evidence="4">
    <location>
        <position position="215"/>
    </location>
    <ligand>
        <name>ATP</name>
        <dbReference type="ChEBI" id="CHEBI:30616"/>
    </ligand>
</feature>
<feature type="binding site" evidence="2">
    <location>
        <position position="215"/>
    </location>
    <ligand>
        <name>Mg(2+)</name>
        <dbReference type="ChEBI" id="CHEBI:18420"/>
    </ligand>
</feature>
<feature type="binding site" evidence="3">
    <location>
        <position position="216"/>
    </location>
    <ligand>
        <name>(2R)-3-phosphoglycerate</name>
        <dbReference type="ChEBI" id="CHEBI:58272"/>
    </ligand>
</feature>
<feature type="binding site" evidence="4">
    <location>
        <position position="216"/>
    </location>
    <ligand>
        <name>AMP</name>
        <dbReference type="ChEBI" id="CHEBI:456215"/>
    </ligand>
</feature>
<feature type="binding site" evidence="2">
    <location>
        <position position="219"/>
    </location>
    <ligand>
        <name>CDP</name>
        <dbReference type="ChEBI" id="CHEBI:58069"/>
    </ligand>
</feature>
<feature type="binding site" evidence="2">
    <location>
        <position position="219"/>
    </location>
    <ligand>
        <name>Mg(2+)</name>
        <dbReference type="ChEBI" id="CHEBI:18420"/>
    </ligand>
</feature>
<feature type="binding site" evidence="3">
    <location>
        <position position="220"/>
    </location>
    <ligand>
        <name>ADP</name>
        <dbReference type="ChEBI" id="CHEBI:456216"/>
    </ligand>
</feature>
<feature type="binding site" evidence="4">
    <location>
        <position position="220"/>
    </location>
    <ligand>
        <name>AMP</name>
        <dbReference type="ChEBI" id="CHEBI:456215"/>
    </ligand>
</feature>
<feature type="binding site" evidence="4">
    <location>
        <position position="220"/>
    </location>
    <ligand>
        <name>ATP</name>
        <dbReference type="ChEBI" id="CHEBI:30616"/>
    </ligand>
</feature>
<feature type="binding site" evidence="2">
    <location>
        <position position="238"/>
    </location>
    <ligand>
        <name>ADP</name>
        <dbReference type="ChEBI" id="CHEBI:456216"/>
    </ligand>
</feature>
<feature type="binding site" evidence="2">
    <location>
        <position position="238"/>
    </location>
    <ligand>
        <name>CDP</name>
        <dbReference type="ChEBI" id="CHEBI:58069"/>
    </ligand>
</feature>
<feature type="binding site" evidence="4">
    <location>
        <position position="239"/>
    </location>
    <ligand>
        <name>AMP</name>
        <dbReference type="ChEBI" id="CHEBI:456215"/>
    </ligand>
</feature>
<feature type="binding site" evidence="4">
    <location>
        <position position="239"/>
    </location>
    <ligand>
        <name>ATP</name>
        <dbReference type="ChEBI" id="CHEBI:30616"/>
    </ligand>
</feature>
<feature type="binding site" evidence="3">
    <location>
        <position position="311"/>
    </location>
    <ligand>
        <name>ADP</name>
        <dbReference type="ChEBI" id="CHEBI:456216"/>
    </ligand>
</feature>
<feature type="binding site" evidence="4">
    <location>
        <position position="311"/>
    </location>
    <ligand>
        <name>AMP</name>
        <dbReference type="ChEBI" id="CHEBI:456215"/>
    </ligand>
</feature>
<feature type="binding site" evidence="4">
    <location>
        <position position="311"/>
    </location>
    <ligand>
        <name>ATP</name>
        <dbReference type="ChEBI" id="CHEBI:30616"/>
    </ligand>
</feature>
<feature type="binding site" evidence="3">
    <location>
        <position position="335"/>
    </location>
    <ligand>
        <name>ADP</name>
        <dbReference type="ChEBI" id="CHEBI:456216"/>
    </ligand>
</feature>
<feature type="binding site" evidence="2">
    <location>
        <position position="336"/>
    </location>
    <ligand>
        <name>CDP</name>
        <dbReference type="ChEBI" id="CHEBI:58069"/>
    </ligand>
</feature>
<feature type="binding site" evidence="2">
    <location>
        <position position="341"/>
    </location>
    <ligand>
        <name>ADP</name>
        <dbReference type="ChEBI" id="CHEBI:456216"/>
    </ligand>
</feature>
<feature type="binding site" evidence="2">
    <location>
        <position position="341"/>
    </location>
    <ligand>
        <name>CDP</name>
        <dbReference type="ChEBI" id="CHEBI:58069"/>
    </ligand>
</feature>
<feature type="binding site" evidence="3">
    <location>
        <position position="342"/>
    </location>
    <ligand>
        <name>ADP</name>
        <dbReference type="ChEBI" id="CHEBI:456216"/>
    </ligand>
</feature>
<feature type="binding site" evidence="4">
    <location>
        <position position="342"/>
    </location>
    <ligand>
        <name>AMP</name>
        <dbReference type="ChEBI" id="CHEBI:456215"/>
    </ligand>
</feature>
<feature type="binding site" evidence="4">
    <location>
        <position position="342"/>
    </location>
    <ligand>
        <name>ATP</name>
        <dbReference type="ChEBI" id="CHEBI:30616"/>
    </ligand>
</feature>
<feature type="binding site" evidence="3">
    <location>
        <position position="374"/>
    </location>
    <ligand>
        <name>ADP</name>
        <dbReference type="ChEBI" id="CHEBI:456216"/>
    </ligand>
</feature>
<feature type="binding site" evidence="4">
    <location>
        <position position="374"/>
    </location>
    <ligand>
        <name>ATP</name>
        <dbReference type="ChEBI" id="CHEBI:30616"/>
    </ligand>
</feature>
<feature type="binding site" evidence="4">
    <location>
        <position position="374"/>
    </location>
    <ligand>
        <name>Mg(2+)</name>
        <dbReference type="ChEBI" id="CHEBI:18420"/>
    </ligand>
</feature>
<feature type="binding site" evidence="3">
    <location>
        <position position="375"/>
    </location>
    <ligand>
        <name>ADP</name>
        <dbReference type="ChEBI" id="CHEBI:456216"/>
    </ligand>
</feature>
<feature type="binding site" evidence="4">
    <location>
        <position position="375"/>
    </location>
    <ligand>
        <name>ATP</name>
        <dbReference type="ChEBI" id="CHEBI:30616"/>
    </ligand>
</feature>
<dbReference type="EC" id="2.7.2.3" evidence="2"/>
<dbReference type="EMBL" id="L25121">
    <property type="protein sequence ID" value="AAC12659.1"/>
    <property type="molecule type" value="Genomic_DNA"/>
</dbReference>
<dbReference type="SMR" id="P50312"/>
<dbReference type="VEuPathDB" id="TriTrypDB:LmjF.20.0100"/>
<dbReference type="VEuPathDB" id="TriTrypDB:LMJFC_200006100"/>
<dbReference type="VEuPathDB" id="TriTrypDB:LMJLV39_200006000"/>
<dbReference type="VEuPathDB" id="TriTrypDB:LMJSD75_300041800"/>
<dbReference type="eggNOG" id="KOG1367">
    <property type="taxonomic scope" value="Eukaryota"/>
</dbReference>
<dbReference type="BRENDA" id="2.7.2.3">
    <property type="organism ID" value="2950"/>
</dbReference>
<dbReference type="UniPathway" id="UPA00109">
    <property type="reaction ID" value="UER00185"/>
</dbReference>
<dbReference type="GO" id="GO:0020015">
    <property type="term" value="C:glycosome"/>
    <property type="evidence" value="ECO:0007669"/>
    <property type="project" value="UniProtKB-SubCell"/>
</dbReference>
<dbReference type="GO" id="GO:0005524">
    <property type="term" value="F:ATP binding"/>
    <property type="evidence" value="ECO:0007669"/>
    <property type="project" value="UniProtKB-KW"/>
</dbReference>
<dbReference type="GO" id="GO:0046872">
    <property type="term" value="F:metal ion binding"/>
    <property type="evidence" value="ECO:0007669"/>
    <property type="project" value="UniProtKB-KW"/>
</dbReference>
<dbReference type="GO" id="GO:0004618">
    <property type="term" value="F:phosphoglycerate kinase activity"/>
    <property type="evidence" value="ECO:0007669"/>
    <property type="project" value="UniProtKB-EC"/>
</dbReference>
<dbReference type="GO" id="GO:0006096">
    <property type="term" value="P:glycolytic process"/>
    <property type="evidence" value="ECO:0007669"/>
    <property type="project" value="UniProtKB-UniPathway"/>
</dbReference>
<dbReference type="CDD" id="cd00318">
    <property type="entry name" value="Phosphoglycerate_kinase"/>
    <property type="match status" value="1"/>
</dbReference>
<dbReference type="FunFam" id="3.40.50.1260:FF:000001">
    <property type="entry name" value="Phosphoglycerate kinase"/>
    <property type="match status" value="1"/>
</dbReference>
<dbReference type="FunFam" id="3.40.50.1260:FF:000011">
    <property type="entry name" value="Phosphoglycerate kinase"/>
    <property type="match status" value="1"/>
</dbReference>
<dbReference type="Gene3D" id="3.40.50.1260">
    <property type="entry name" value="Phosphoglycerate kinase, N-terminal domain"/>
    <property type="match status" value="2"/>
</dbReference>
<dbReference type="HAMAP" id="MF_00145">
    <property type="entry name" value="Phosphoglyc_kinase"/>
    <property type="match status" value="1"/>
</dbReference>
<dbReference type="InterPro" id="IPR027250">
    <property type="entry name" value="Pgk_euglenozoa"/>
</dbReference>
<dbReference type="InterPro" id="IPR001576">
    <property type="entry name" value="Phosphoglycerate_kinase"/>
</dbReference>
<dbReference type="InterPro" id="IPR015911">
    <property type="entry name" value="Phosphoglycerate_kinase_CS"/>
</dbReference>
<dbReference type="InterPro" id="IPR015824">
    <property type="entry name" value="Phosphoglycerate_kinase_N"/>
</dbReference>
<dbReference type="InterPro" id="IPR036043">
    <property type="entry name" value="Phosphoglycerate_kinase_sf"/>
</dbReference>
<dbReference type="PANTHER" id="PTHR11406">
    <property type="entry name" value="PHOSPHOGLYCERATE KINASE"/>
    <property type="match status" value="1"/>
</dbReference>
<dbReference type="PANTHER" id="PTHR11406:SF23">
    <property type="entry name" value="PHOSPHOGLYCERATE KINASE 1, CHLOROPLASTIC-RELATED"/>
    <property type="match status" value="1"/>
</dbReference>
<dbReference type="Pfam" id="PF00162">
    <property type="entry name" value="PGK"/>
    <property type="match status" value="1"/>
</dbReference>
<dbReference type="PIRSF" id="PIRSF000724">
    <property type="entry name" value="Pgk"/>
    <property type="match status" value="1"/>
</dbReference>
<dbReference type="PIRSF" id="PIRSF500126">
    <property type="entry name" value="Pgk_euglenozoa"/>
    <property type="match status" value="1"/>
</dbReference>
<dbReference type="PRINTS" id="PR00477">
    <property type="entry name" value="PHGLYCKINASE"/>
</dbReference>
<dbReference type="SUPFAM" id="SSF53748">
    <property type="entry name" value="Phosphoglycerate kinase"/>
    <property type="match status" value="1"/>
</dbReference>
<dbReference type="PROSITE" id="PS00111">
    <property type="entry name" value="PGLYCERATE_KINASE"/>
    <property type="match status" value="1"/>
</dbReference>
<organism>
    <name type="scientific">Leishmania major</name>
    <dbReference type="NCBI Taxonomy" id="5664"/>
    <lineage>
        <taxon>Eukaryota</taxon>
        <taxon>Discoba</taxon>
        <taxon>Euglenozoa</taxon>
        <taxon>Kinetoplastea</taxon>
        <taxon>Metakinetoplastina</taxon>
        <taxon>Trypanosomatida</taxon>
        <taxon>Trypanosomatidae</taxon>
        <taxon>Leishmaniinae</taxon>
        <taxon>Leishmania</taxon>
    </lineage>
</organism>
<gene>
    <name type="primary">PGKC</name>
</gene>
<evidence type="ECO:0000250" key="1"/>
<evidence type="ECO:0000250" key="2">
    <source>
        <dbReference type="UniProtKB" id="P00558"/>
    </source>
</evidence>
<evidence type="ECO:0000250" key="3">
    <source>
        <dbReference type="UniProtKB" id="P07378"/>
    </source>
</evidence>
<evidence type="ECO:0000250" key="4">
    <source>
        <dbReference type="UniProtKB" id="Q7SIB7"/>
    </source>
</evidence>
<evidence type="ECO:0000305" key="5"/>
<name>PGKC_LEIMA</name>
<reference key="1">
    <citation type="journal article" date="1997" name="Mol. Biochem. Parasitol.">
        <title>Characterisation of phosphoglycerate kinase genes in Leishmania major and evidence for the absence of a third closely related gene or isoenzyme.</title>
        <authorList>
            <person name="McKoy G.E.M."/>
            <person name="Badal M."/>
            <person name="Prescott Q."/>
            <person name="Lux H."/>
            <person name="Hart D.T."/>
        </authorList>
    </citation>
    <scope>NUCLEOTIDE SEQUENCE [GENOMIC DNA]</scope>
    <source>
        <strain>MHOM/IL/81/Friedlin</strain>
    </source>
</reference>
<reference key="2">
    <citation type="journal article" date="1998" name="Mol. Biochem. Parasitol.">
        <authorList>
            <person name="McKoy G.E.M."/>
            <person name="Badal M."/>
            <person name="Prescott Q."/>
            <person name="Lux H."/>
            <person name="Hart D.T."/>
        </authorList>
    </citation>
    <scope>ERRATUM OF PUBMED:9497041</scope>
</reference>
<keyword id="KW-0067">ATP-binding</keyword>
<keyword id="KW-0324">Glycolysis</keyword>
<keyword id="KW-0327">Glycosome</keyword>
<keyword id="KW-0418">Kinase</keyword>
<keyword id="KW-0460">Magnesium</keyword>
<keyword id="KW-0479">Metal-binding</keyword>
<keyword id="KW-0547">Nucleotide-binding</keyword>
<keyword id="KW-0576">Peroxisome</keyword>
<keyword id="KW-0808">Transferase</keyword>
<accession>P50312</accession>